<accession>A7GJ85</accession>
<feature type="chain" id="PRO_0000307991" description="Large ribosomal subunit protein uL1">
    <location>
        <begin position="1"/>
        <end position="229"/>
    </location>
</feature>
<evidence type="ECO:0000255" key="1">
    <source>
        <dbReference type="HAMAP-Rule" id="MF_01318"/>
    </source>
</evidence>
<evidence type="ECO:0000305" key="2"/>
<comment type="function">
    <text evidence="1">Binds directly to 23S rRNA. The L1 stalk is quite mobile in the ribosome, and is involved in E site tRNA release.</text>
</comment>
<comment type="function">
    <text evidence="1">Protein L1 is also a translational repressor protein, it controls the translation of the L11 operon by binding to its mRNA.</text>
</comment>
<comment type="subunit">
    <text evidence="1">Part of the 50S ribosomal subunit.</text>
</comment>
<comment type="similarity">
    <text evidence="1">Belongs to the universal ribosomal protein uL1 family.</text>
</comment>
<sequence length="229" mass="24644">MGKKYTESVKLVDKNTLYTVQEAIELVTKTSKAKFDETVELAVRLGVDPRHADQQVRGAVVLPHGTGKTVRVLVFAKGDKVNEAQEAGADFVGAEELVEKIQKENWFDFDVVVATPDMMGVVGRLGRVLGPKGLMPNPKSGTVTFDVAKAIADIKAGKVEYRVDKTAIIHVPIGKSSFGEEKLSDNFHVLMEAVVKAKPAAAKGQYIKSVAISSTMGPGIKINPGKVLE</sequence>
<proteinExistence type="inferred from homology"/>
<name>RL1_CLOBL</name>
<reference key="1">
    <citation type="submission" date="2007-06" db="EMBL/GenBank/DDBJ databases">
        <authorList>
            <person name="Brinkac L.M."/>
            <person name="Daugherty S."/>
            <person name="Dodson R.J."/>
            <person name="Madupu R."/>
            <person name="Brown J.L."/>
            <person name="Bruce D."/>
            <person name="Detter C."/>
            <person name="Munk C."/>
            <person name="Smith L.A."/>
            <person name="Smith T.J."/>
            <person name="White O."/>
            <person name="Brettin T.S."/>
        </authorList>
    </citation>
    <scope>NUCLEOTIDE SEQUENCE [LARGE SCALE GENOMIC DNA]</scope>
    <source>
        <strain>Langeland / NCTC 10281 / Type F</strain>
    </source>
</reference>
<protein>
    <recommendedName>
        <fullName evidence="1">Large ribosomal subunit protein uL1</fullName>
    </recommendedName>
    <alternativeName>
        <fullName evidence="2">50S ribosomal protein L1</fullName>
    </alternativeName>
</protein>
<keyword id="KW-0678">Repressor</keyword>
<keyword id="KW-0687">Ribonucleoprotein</keyword>
<keyword id="KW-0689">Ribosomal protein</keyword>
<keyword id="KW-0694">RNA-binding</keyword>
<keyword id="KW-0699">rRNA-binding</keyword>
<keyword id="KW-0810">Translation regulation</keyword>
<keyword id="KW-0820">tRNA-binding</keyword>
<organism>
    <name type="scientific">Clostridium botulinum (strain Langeland / NCTC 10281 / Type F)</name>
    <dbReference type="NCBI Taxonomy" id="441772"/>
    <lineage>
        <taxon>Bacteria</taxon>
        <taxon>Bacillati</taxon>
        <taxon>Bacillota</taxon>
        <taxon>Clostridia</taxon>
        <taxon>Eubacteriales</taxon>
        <taxon>Clostridiaceae</taxon>
        <taxon>Clostridium</taxon>
    </lineage>
</organism>
<gene>
    <name evidence="1" type="primary">rplA</name>
    <name type="ordered locus">CLI_3674</name>
</gene>
<dbReference type="EMBL" id="CP000728">
    <property type="protein sequence ID" value="ABS39456.1"/>
    <property type="molecule type" value="Genomic_DNA"/>
</dbReference>
<dbReference type="RefSeq" id="WP_003357362.1">
    <property type="nucleotide sequence ID" value="NC_009699.1"/>
</dbReference>
<dbReference type="SMR" id="A7GJ85"/>
<dbReference type="GeneID" id="5186180"/>
<dbReference type="KEGG" id="cbf:CLI_3674"/>
<dbReference type="HOGENOM" id="CLU_062853_0_0_9"/>
<dbReference type="Proteomes" id="UP000002410">
    <property type="component" value="Chromosome"/>
</dbReference>
<dbReference type="GO" id="GO:0015934">
    <property type="term" value="C:large ribosomal subunit"/>
    <property type="evidence" value="ECO:0007669"/>
    <property type="project" value="InterPro"/>
</dbReference>
<dbReference type="GO" id="GO:0019843">
    <property type="term" value="F:rRNA binding"/>
    <property type="evidence" value="ECO:0007669"/>
    <property type="project" value="UniProtKB-UniRule"/>
</dbReference>
<dbReference type="GO" id="GO:0003735">
    <property type="term" value="F:structural constituent of ribosome"/>
    <property type="evidence" value="ECO:0007669"/>
    <property type="project" value="InterPro"/>
</dbReference>
<dbReference type="GO" id="GO:0000049">
    <property type="term" value="F:tRNA binding"/>
    <property type="evidence" value="ECO:0007669"/>
    <property type="project" value="UniProtKB-KW"/>
</dbReference>
<dbReference type="GO" id="GO:0006417">
    <property type="term" value="P:regulation of translation"/>
    <property type="evidence" value="ECO:0007669"/>
    <property type="project" value="UniProtKB-KW"/>
</dbReference>
<dbReference type="GO" id="GO:0006412">
    <property type="term" value="P:translation"/>
    <property type="evidence" value="ECO:0007669"/>
    <property type="project" value="UniProtKB-UniRule"/>
</dbReference>
<dbReference type="CDD" id="cd00403">
    <property type="entry name" value="Ribosomal_L1"/>
    <property type="match status" value="1"/>
</dbReference>
<dbReference type="FunFam" id="3.40.50.790:FF:000001">
    <property type="entry name" value="50S ribosomal protein L1"/>
    <property type="match status" value="1"/>
</dbReference>
<dbReference type="Gene3D" id="3.30.190.20">
    <property type="match status" value="1"/>
</dbReference>
<dbReference type="Gene3D" id="3.40.50.790">
    <property type="match status" value="1"/>
</dbReference>
<dbReference type="HAMAP" id="MF_01318_B">
    <property type="entry name" value="Ribosomal_uL1_B"/>
    <property type="match status" value="1"/>
</dbReference>
<dbReference type="InterPro" id="IPR005878">
    <property type="entry name" value="Ribosom_uL1_bac-type"/>
</dbReference>
<dbReference type="InterPro" id="IPR002143">
    <property type="entry name" value="Ribosomal_uL1"/>
</dbReference>
<dbReference type="InterPro" id="IPR023674">
    <property type="entry name" value="Ribosomal_uL1-like"/>
</dbReference>
<dbReference type="InterPro" id="IPR028364">
    <property type="entry name" value="Ribosomal_uL1/biogenesis"/>
</dbReference>
<dbReference type="InterPro" id="IPR016095">
    <property type="entry name" value="Ribosomal_uL1_3-a/b-sand"/>
</dbReference>
<dbReference type="InterPro" id="IPR023673">
    <property type="entry name" value="Ribosomal_uL1_CS"/>
</dbReference>
<dbReference type="NCBIfam" id="TIGR01169">
    <property type="entry name" value="rplA_bact"/>
    <property type="match status" value="1"/>
</dbReference>
<dbReference type="PANTHER" id="PTHR36427">
    <property type="entry name" value="54S RIBOSOMAL PROTEIN L1, MITOCHONDRIAL"/>
    <property type="match status" value="1"/>
</dbReference>
<dbReference type="PANTHER" id="PTHR36427:SF3">
    <property type="entry name" value="LARGE RIBOSOMAL SUBUNIT PROTEIN UL1M"/>
    <property type="match status" value="1"/>
</dbReference>
<dbReference type="Pfam" id="PF00687">
    <property type="entry name" value="Ribosomal_L1"/>
    <property type="match status" value="1"/>
</dbReference>
<dbReference type="PIRSF" id="PIRSF002155">
    <property type="entry name" value="Ribosomal_L1"/>
    <property type="match status" value="1"/>
</dbReference>
<dbReference type="SUPFAM" id="SSF56808">
    <property type="entry name" value="Ribosomal protein L1"/>
    <property type="match status" value="1"/>
</dbReference>
<dbReference type="PROSITE" id="PS01199">
    <property type="entry name" value="RIBOSOMAL_L1"/>
    <property type="match status" value="1"/>
</dbReference>